<organism>
    <name type="scientific">Arabidopsis thaliana</name>
    <name type="common">Mouse-ear cress</name>
    <dbReference type="NCBI Taxonomy" id="3702"/>
    <lineage>
        <taxon>Eukaryota</taxon>
        <taxon>Viridiplantae</taxon>
        <taxon>Streptophyta</taxon>
        <taxon>Embryophyta</taxon>
        <taxon>Tracheophyta</taxon>
        <taxon>Spermatophyta</taxon>
        <taxon>Magnoliopsida</taxon>
        <taxon>eudicotyledons</taxon>
        <taxon>Gunneridae</taxon>
        <taxon>Pentapetalae</taxon>
        <taxon>rosids</taxon>
        <taxon>malvids</taxon>
        <taxon>Brassicales</taxon>
        <taxon>Brassicaceae</taxon>
        <taxon>Camelineae</taxon>
        <taxon>Arabidopsis</taxon>
    </lineage>
</organism>
<proteinExistence type="evidence at protein level"/>
<dbReference type="EMBL" id="AB020745">
    <property type="protein sequence ID" value="BAA96968.1"/>
    <property type="molecule type" value="Genomic_DNA"/>
</dbReference>
<dbReference type="EMBL" id="CP002688">
    <property type="protein sequence ID" value="AED95675.1"/>
    <property type="molecule type" value="Genomic_DNA"/>
</dbReference>
<dbReference type="EMBL" id="AY074359">
    <property type="protein sequence ID" value="AAL67055.1"/>
    <property type="molecule type" value="mRNA"/>
</dbReference>
<dbReference type="EMBL" id="AY133780">
    <property type="protein sequence ID" value="AAM91714.1"/>
    <property type="molecule type" value="mRNA"/>
</dbReference>
<dbReference type="EMBL" id="AY087100">
    <property type="protein sequence ID" value="AAM64659.1"/>
    <property type="molecule type" value="mRNA"/>
</dbReference>
<dbReference type="RefSeq" id="NP_568698.1">
    <property type="nucleotide sequence ID" value="NM_124223.4"/>
</dbReference>
<dbReference type="PDB" id="1XY7">
    <property type="method" value="X-ray"/>
    <property type="resolution" value="1.80 A"/>
    <property type="chains" value="A/B=1-166"/>
</dbReference>
<dbReference type="PDB" id="2Q48">
    <property type="method" value="X-ray"/>
    <property type="resolution" value="1.80 A"/>
    <property type="chains" value="A/B=1-166"/>
</dbReference>
<dbReference type="PDBsum" id="1XY7"/>
<dbReference type="PDBsum" id="2Q48"/>
<dbReference type="SMR" id="Q9LV66"/>
<dbReference type="BioGRID" id="20149">
    <property type="interactions" value="7"/>
</dbReference>
<dbReference type="FunCoup" id="Q9LV66">
    <property type="interactions" value="66"/>
</dbReference>
<dbReference type="STRING" id="3702.Q9LV66"/>
<dbReference type="iPTMnet" id="Q9LV66"/>
<dbReference type="PaxDb" id="3702-AT5G48480.1"/>
<dbReference type="ProteomicsDB" id="243167"/>
<dbReference type="DNASU" id="834903"/>
<dbReference type="EnsemblPlants" id="AT5G48480.1">
    <property type="protein sequence ID" value="AT5G48480.1"/>
    <property type="gene ID" value="AT5G48480"/>
</dbReference>
<dbReference type="GeneID" id="834903"/>
<dbReference type="Gramene" id="AT5G48480.1">
    <property type="protein sequence ID" value="AT5G48480.1"/>
    <property type="gene ID" value="AT5G48480"/>
</dbReference>
<dbReference type="KEGG" id="ath:AT5G48480"/>
<dbReference type="Araport" id="AT5G48480"/>
<dbReference type="TAIR" id="AT5G48480"/>
<dbReference type="eggNOG" id="ENOG502RZJT">
    <property type="taxonomic scope" value="Eukaryota"/>
</dbReference>
<dbReference type="HOGENOM" id="CLU_046006_11_2_1"/>
<dbReference type="InParanoid" id="Q9LV66"/>
<dbReference type="OMA" id="PKRKADH"/>
<dbReference type="OrthoDB" id="2013034at2759"/>
<dbReference type="PhylomeDB" id="Q9LV66"/>
<dbReference type="CD-CODE" id="4299E36E">
    <property type="entry name" value="Nucleolus"/>
</dbReference>
<dbReference type="EvolutionaryTrace" id="Q9LV66"/>
<dbReference type="PRO" id="PR:Q9LV66"/>
<dbReference type="Proteomes" id="UP000006548">
    <property type="component" value="Chromosome 5"/>
</dbReference>
<dbReference type="ExpressionAtlas" id="Q9LV66">
    <property type="expression patterns" value="baseline and differential"/>
</dbReference>
<dbReference type="GO" id="GO:0005829">
    <property type="term" value="C:cytosol"/>
    <property type="evidence" value="ECO:0007005"/>
    <property type="project" value="TAIR"/>
</dbReference>
<dbReference type="CDD" id="cd07246">
    <property type="entry name" value="VOC_like"/>
    <property type="match status" value="1"/>
</dbReference>
<dbReference type="Gene3D" id="3.10.180.10">
    <property type="entry name" value="2,3-Dihydroxybiphenyl 1,2-Dioxygenase, domain 1"/>
    <property type="match status" value="1"/>
</dbReference>
<dbReference type="InterPro" id="IPR054575">
    <property type="entry name" value="At5g48480-like_C"/>
</dbReference>
<dbReference type="InterPro" id="IPR054576">
    <property type="entry name" value="At5g48480-like_N"/>
</dbReference>
<dbReference type="InterPro" id="IPR029068">
    <property type="entry name" value="Glyas_Bleomycin-R_OHBP_Dase"/>
</dbReference>
<dbReference type="PANTHER" id="PTHR34109">
    <property type="entry name" value="BNAUNNG04460D PROTEIN-RELATED"/>
    <property type="match status" value="1"/>
</dbReference>
<dbReference type="PANTHER" id="PTHR34109:SF1">
    <property type="entry name" value="VOC DOMAIN-CONTAINING PROTEIN"/>
    <property type="match status" value="1"/>
</dbReference>
<dbReference type="Pfam" id="PF22650">
    <property type="entry name" value="At5g48480-like_C"/>
    <property type="match status" value="1"/>
</dbReference>
<dbReference type="Pfam" id="PF22656">
    <property type="entry name" value="At5g48480-like_N"/>
    <property type="match status" value="1"/>
</dbReference>
<dbReference type="SUPFAM" id="SSF54593">
    <property type="entry name" value="Glyoxalase/Bleomycin resistance protein/Dihydroxybiphenyl dioxygenase"/>
    <property type="match status" value="1"/>
</dbReference>
<sequence length="166" mass="17557">MAQEDVTAVATNGAGPVETHLVFTEFKQMLLVEAQKVGDAVTFYKSAFGAIESGHSLYPKRKLDQELPHVLSSELNLAGSSFVVCDVSSLPGFSTAKSEGSGVTFLLGTKDAEAAVAKAVDAGAVKVEVTEAEVELGFKGKVTDPFGVTWIFAEKKTVITDENKEV</sequence>
<gene>
    <name type="ordered locus">At5g48480</name>
    <name type="ORF">MJE7.12</name>
</gene>
<feature type="initiator methionine" description="Removed" evidence="2">
    <location>
        <position position="1"/>
    </location>
</feature>
<feature type="chain" id="PRO_0000220621" description="Uncharacterized protein At5g48480">
    <location>
        <begin position="2"/>
        <end position="166"/>
    </location>
</feature>
<feature type="modified residue" description="N-acetylalanine" evidence="2">
    <location>
        <position position="2"/>
    </location>
</feature>
<feature type="strand" evidence="3">
    <location>
        <begin position="24"/>
        <end position="32"/>
    </location>
</feature>
<feature type="helix" evidence="3">
    <location>
        <begin position="37"/>
        <end position="48"/>
    </location>
</feature>
<feature type="strand" evidence="3">
    <location>
        <begin position="54"/>
        <end position="56"/>
    </location>
</feature>
<feature type="strand" evidence="3">
    <location>
        <begin position="72"/>
        <end position="77"/>
    </location>
</feature>
<feature type="strand" evidence="3">
    <location>
        <begin position="80"/>
        <end position="86"/>
    </location>
</feature>
<feature type="helix" evidence="3">
    <location>
        <begin position="87"/>
        <end position="89"/>
    </location>
</feature>
<feature type="strand" evidence="3">
    <location>
        <begin position="104"/>
        <end position="108"/>
    </location>
</feature>
<feature type="helix" evidence="3">
    <location>
        <begin position="112"/>
        <end position="121"/>
    </location>
</feature>
<feature type="helix" evidence="3">
    <location>
        <begin position="131"/>
        <end position="135"/>
    </location>
</feature>
<feature type="strand" evidence="3">
    <location>
        <begin position="138"/>
        <end position="143"/>
    </location>
</feature>
<feature type="strand" evidence="3">
    <location>
        <begin position="149"/>
        <end position="153"/>
    </location>
</feature>
<evidence type="ECO:0000305" key="1">
    <source ref="6"/>
</evidence>
<evidence type="ECO:0007744" key="2">
    <source>
    </source>
</evidence>
<evidence type="ECO:0007829" key="3">
    <source>
        <dbReference type="PDB" id="1XY7"/>
    </source>
</evidence>
<protein>
    <recommendedName>
        <fullName>Uncharacterized protein At5g48480</fullName>
    </recommendedName>
</protein>
<name>Y5848_ARATH</name>
<accession>Q9LV66</accession>
<reference key="1">
    <citation type="journal article" date="2000" name="DNA Res.">
        <title>Structural analysis of Arabidopsis thaliana chromosome 5. X. Sequence features of the regions of 3,076,755 bp covered by sixty P1 and TAC clones.</title>
        <authorList>
            <person name="Sato S."/>
            <person name="Nakamura Y."/>
            <person name="Kaneko T."/>
            <person name="Katoh T."/>
            <person name="Asamizu E."/>
            <person name="Kotani H."/>
            <person name="Tabata S."/>
        </authorList>
    </citation>
    <scope>NUCLEOTIDE SEQUENCE [LARGE SCALE GENOMIC DNA]</scope>
    <source>
        <strain>cv. Columbia</strain>
    </source>
</reference>
<reference key="2">
    <citation type="journal article" date="2017" name="Plant J.">
        <title>Araport11: a complete reannotation of the Arabidopsis thaliana reference genome.</title>
        <authorList>
            <person name="Cheng C.Y."/>
            <person name="Krishnakumar V."/>
            <person name="Chan A.P."/>
            <person name="Thibaud-Nissen F."/>
            <person name="Schobel S."/>
            <person name="Town C.D."/>
        </authorList>
    </citation>
    <scope>GENOME REANNOTATION</scope>
    <source>
        <strain>cv. Columbia</strain>
    </source>
</reference>
<reference key="3">
    <citation type="journal article" date="2003" name="Science">
        <title>Empirical analysis of transcriptional activity in the Arabidopsis genome.</title>
        <authorList>
            <person name="Yamada K."/>
            <person name="Lim J."/>
            <person name="Dale J.M."/>
            <person name="Chen H."/>
            <person name="Shinn P."/>
            <person name="Palm C.J."/>
            <person name="Southwick A.M."/>
            <person name="Wu H.C."/>
            <person name="Kim C.J."/>
            <person name="Nguyen M."/>
            <person name="Pham P.K."/>
            <person name="Cheuk R.F."/>
            <person name="Karlin-Newmann G."/>
            <person name="Liu S.X."/>
            <person name="Lam B."/>
            <person name="Sakano H."/>
            <person name="Wu T."/>
            <person name="Yu G."/>
            <person name="Miranda M."/>
            <person name="Quach H.L."/>
            <person name="Tripp M."/>
            <person name="Chang C.H."/>
            <person name="Lee J.M."/>
            <person name="Toriumi M.J."/>
            <person name="Chan M.M."/>
            <person name="Tang C.C."/>
            <person name="Onodera C.S."/>
            <person name="Deng J.M."/>
            <person name="Akiyama K."/>
            <person name="Ansari Y."/>
            <person name="Arakawa T."/>
            <person name="Banh J."/>
            <person name="Banno F."/>
            <person name="Bowser L."/>
            <person name="Brooks S.Y."/>
            <person name="Carninci P."/>
            <person name="Chao Q."/>
            <person name="Choy N."/>
            <person name="Enju A."/>
            <person name="Goldsmith A.D."/>
            <person name="Gurjal M."/>
            <person name="Hansen N.F."/>
            <person name="Hayashizaki Y."/>
            <person name="Johnson-Hopson C."/>
            <person name="Hsuan V.W."/>
            <person name="Iida K."/>
            <person name="Karnes M."/>
            <person name="Khan S."/>
            <person name="Koesema E."/>
            <person name="Ishida J."/>
            <person name="Jiang P.X."/>
            <person name="Jones T."/>
            <person name="Kawai J."/>
            <person name="Kamiya A."/>
            <person name="Meyers C."/>
            <person name="Nakajima M."/>
            <person name="Narusaka M."/>
            <person name="Seki M."/>
            <person name="Sakurai T."/>
            <person name="Satou M."/>
            <person name="Tamse R."/>
            <person name="Vaysberg M."/>
            <person name="Wallender E.K."/>
            <person name="Wong C."/>
            <person name="Yamamura Y."/>
            <person name="Yuan S."/>
            <person name="Shinozaki K."/>
            <person name="Davis R.W."/>
            <person name="Theologis A."/>
            <person name="Ecker J.R."/>
        </authorList>
    </citation>
    <scope>NUCLEOTIDE SEQUENCE [LARGE SCALE MRNA]</scope>
    <source>
        <strain>cv. Columbia</strain>
    </source>
</reference>
<reference key="4">
    <citation type="submission" date="2002-03" db="EMBL/GenBank/DDBJ databases">
        <title>Full-length cDNA from Arabidopsis thaliana.</title>
        <authorList>
            <person name="Brover V.V."/>
            <person name="Troukhan M.E."/>
            <person name="Alexandrov N.A."/>
            <person name="Lu Y.-P."/>
            <person name="Flavell R.B."/>
            <person name="Feldmann K.A."/>
        </authorList>
    </citation>
    <scope>NUCLEOTIDE SEQUENCE [LARGE SCALE MRNA]</scope>
</reference>
<reference key="5">
    <citation type="journal article" date="2012" name="Mol. Cell. Proteomics">
        <title>Comparative large-scale characterisation of plant vs. mammal proteins reveals similar and idiosyncratic N-alpha acetylation features.</title>
        <authorList>
            <person name="Bienvenut W.V."/>
            <person name="Sumpton D."/>
            <person name="Martinez A."/>
            <person name="Lilla S."/>
            <person name="Espagne C."/>
            <person name="Meinnel T."/>
            <person name="Giglione C."/>
        </authorList>
    </citation>
    <scope>ACETYLATION [LARGE SCALE ANALYSIS] AT ALA-2</scope>
    <scope>CLEAVAGE OF INITIATOR METHIONINE [LARGE SCALE ANALYSIS]</scope>
    <scope>IDENTIFICATION BY MASS SPECTROMETRY [LARGE SCALE ANALYSIS]</scope>
</reference>
<reference key="6">
    <citation type="submission" date="2005-02" db="PDB data bank">
        <title>X-ray structure of gene product from Arabidopsis thaliana At5g48480.</title>
        <authorList>
            <consortium name="Center for eukaryotic structural genomics (CESG)"/>
        </authorList>
    </citation>
    <scope>X-RAY CRYSTALLOGRAPHY (1.8 ANGSTROMS) OF 2-166</scope>
    <scope>SUBUNIT</scope>
</reference>
<comment type="subunit">
    <text evidence="1">Homodimer.</text>
</comment>
<keyword id="KW-0002">3D-structure</keyword>
<keyword id="KW-0007">Acetylation</keyword>
<keyword id="KW-1185">Reference proteome</keyword>